<proteinExistence type="inferred from homology"/>
<keyword id="KW-0961">Cell wall biogenesis/degradation</keyword>
<keyword id="KW-0378">Hydrolase</keyword>
<keyword id="KW-0479">Metal-binding</keyword>
<keyword id="KW-0482">Metalloprotease</keyword>
<keyword id="KW-0645">Protease</keyword>
<keyword id="KW-0964">Secreted</keyword>
<keyword id="KW-0732">Signal</keyword>
<keyword id="KW-0843">Virulence</keyword>
<keyword id="KW-0862">Zinc</keyword>
<keyword id="KW-0865">Zymogen</keyword>
<gene>
    <name type="primary">lytM</name>
    <name type="ordered locus">SA0265</name>
</gene>
<organism>
    <name type="scientific">Staphylococcus aureus (strain N315)</name>
    <dbReference type="NCBI Taxonomy" id="158879"/>
    <lineage>
        <taxon>Bacteria</taxon>
        <taxon>Bacillati</taxon>
        <taxon>Bacillota</taxon>
        <taxon>Bacilli</taxon>
        <taxon>Bacillales</taxon>
        <taxon>Staphylococcaceae</taxon>
        <taxon>Staphylococcus</taxon>
    </lineage>
</organism>
<feature type="signal peptide" evidence="1">
    <location>
        <begin position="1"/>
        <end position="25"/>
    </location>
</feature>
<feature type="chain" id="PRO_0000026822" description="Glycyl-glycine endopeptidase LytM">
    <location>
        <begin position="26"/>
        <end position="316"/>
    </location>
</feature>
<feature type="region of interest" description="Disordered" evidence="2">
    <location>
        <begin position="133"/>
        <end position="189"/>
    </location>
</feature>
<feature type="compositionally biased region" description="Polar residues" evidence="2">
    <location>
        <begin position="145"/>
        <end position="158"/>
    </location>
</feature>
<feature type="compositionally biased region" description="Polar residues" evidence="2">
    <location>
        <begin position="166"/>
        <end position="181"/>
    </location>
</feature>
<feature type="binding site" evidence="1">
    <location>
        <position position="117"/>
    </location>
    <ligand>
        <name>Zn(2+)</name>
        <dbReference type="ChEBI" id="CHEBI:29105"/>
    </ligand>
</feature>
<feature type="binding site" evidence="1">
    <location>
        <position position="210"/>
    </location>
    <ligand>
        <name>Zn(2+)</name>
        <dbReference type="ChEBI" id="CHEBI:29105"/>
    </ligand>
</feature>
<feature type="binding site" evidence="1">
    <location>
        <position position="214"/>
    </location>
    <ligand>
        <name>Zn(2+)</name>
        <dbReference type="ChEBI" id="CHEBI:29105"/>
    </ligand>
</feature>
<feature type="binding site" evidence="1">
    <location>
        <position position="293"/>
    </location>
    <ligand>
        <name>Zn(2+)</name>
        <dbReference type="ChEBI" id="CHEBI:29105"/>
    </ligand>
</feature>
<dbReference type="EC" id="3.4.24.75"/>
<dbReference type="EMBL" id="BA000018">
    <property type="protein sequence ID" value="BAB41489.1"/>
    <property type="molecule type" value="Genomic_DNA"/>
</dbReference>
<dbReference type="PIR" id="F89791">
    <property type="entry name" value="F89791"/>
</dbReference>
<dbReference type="RefSeq" id="WP_000736784.1">
    <property type="nucleotide sequence ID" value="NC_002745.2"/>
</dbReference>
<dbReference type="SMR" id="Q7A7T0"/>
<dbReference type="MEROPS" id="M23.013"/>
<dbReference type="EnsemblBacteria" id="BAB41489">
    <property type="protein sequence ID" value="BAB41489"/>
    <property type="gene ID" value="BAB41489"/>
</dbReference>
<dbReference type="KEGG" id="sau:SA0265"/>
<dbReference type="HOGENOM" id="CLU_073067_0_0_9"/>
<dbReference type="GO" id="GO:0005576">
    <property type="term" value="C:extracellular region"/>
    <property type="evidence" value="ECO:0007669"/>
    <property type="project" value="UniProtKB-SubCell"/>
</dbReference>
<dbReference type="GO" id="GO:0046872">
    <property type="term" value="F:metal ion binding"/>
    <property type="evidence" value="ECO:0007669"/>
    <property type="project" value="UniProtKB-KW"/>
</dbReference>
<dbReference type="GO" id="GO:0004222">
    <property type="term" value="F:metalloendopeptidase activity"/>
    <property type="evidence" value="ECO:0007669"/>
    <property type="project" value="TreeGrafter"/>
</dbReference>
<dbReference type="GO" id="GO:0071555">
    <property type="term" value="P:cell wall organization"/>
    <property type="evidence" value="ECO:0007669"/>
    <property type="project" value="UniProtKB-KW"/>
</dbReference>
<dbReference type="GO" id="GO:0006508">
    <property type="term" value="P:proteolysis"/>
    <property type="evidence" value="ECO:0007669"/>
    <property type="project" value="UniProtKB-KW"/>
</dbReference>
<dbReference type="CDD" id="cd12797">
    <property type="entry name" value="M23_peptidase"/>
    <property type="match status" value="1"/>
</dbReference>
<dbReference type="FunFam" id="2.70.70.10:FF:000027">
    <property type="entry name" value="Glycyl-glycine endopeptidase LytM"/>
    <property type="match status" value="1"/>
</dbReference>
<dbReference type="Gene3D" id="2.40.50.290">
    <property type="match status" value="1"/>
</dbReference>
<dbReference type="Gene3D" id="2.70.70.10">
    <property type="entry name" value="Glucose Permease (Domain IIA)"/>
    <property type="match status" value="1"/>
</dbReference>
<dbReference type="InterPro" id="IPR050570">
    <property type="entry name" value="Cell_wall_metabolism_enzyme"/>
</dbReference>
<dbReference type="InterPro" id="IPR011055">
    <property type="entry name" value="Dup_hybrid_motif"/>
</dbReference>
<dbReference type="InterPro" id="IPR016047">
    <property type="entry name" value="Peptidase_M23"/>
</dbReference>
<dbReference type="PANTHER" id="PTHR21666:SF270">
    <property type="entry name" value="MUREIN HYDROLASE ACTIVATOR ENVC"/>
    <property type="match status" value="1"/>
</dbReference>
<dbReference type="PANTHER" id="PTHR21666">
    <property type="entry name" value="PEPTIDASE-RELATED"/>
    <property type="match status" value="1"/>
</dbReference>
<dbReference type="Pfam" id="PF01551">
    <property type="entry name" value="Peptidase_M23"/>
    <property type="match status" value="1"/>
</dbReference>
<dbReference type="SUPFAM" id="SSF51261">
    <property type="entry name" value="Duplicated hybrid motif"/>
    <property type="match status" value="1"/>
</dbReference>
<name>LYTM_STAAN</name>
<protein>
    <recommendedName>
        <fullName>Glycyl-glycine endopeptidase LytM</fullName>
        <ecNumber>3.4.24.75</ecNumber>
    </recommendedName>
    <alternativeName>
        <fullName>Autolysin LytM</fullName>
    </alternativeName>
</protein>
<sequence>MKKLTAAAIATMGFATFTMAHQADAAETTNTQQAHTLMSTQSQDVSYGTYYTIDSNGDYHHTPDGNWNQAMFDNKEYSYTFVDAQGHTHYFYNCYPKNANANGSGQTYVNPATAGDNNDYTASQSQQHINQYGYQSNVGPDASYYSHSNNNQAYNSHDGNGKVNYPNGTSNQNGGSASKATASGHAKDASWLTSRKQLQPYGQYHGGGAHYGVDYAMPENSPVYSLTDGTVVQAGWSNYGGGNQVTIKEANSNNYQWYMHNNRLTVSAGDKVKAGDQIAYSGSTGNSTAPHVHFQRMSGGIGNQYAVDPTSYLQSR</sequence>
<reference key="1">
    <citation type="journal article" date="2001" name="Lancet">
        <title>Whole genome sequencing of meticillin-resistant Staphylococcus aureus.</title>
        <authorList>
            <person name="Kuroda M."/>
            <person name="Ohta T."/>
            <person name="Uchiyama I."/>
            <person name="Baba T."/>
            <person name="Yuzawa H."/>
            <person name="Kobayashi I."/>
            <person name="Cui L."/>
            <person name="Oguchi A."/>
            <person name="Aoki K."/>
            <person name="Nagai Y."/>
            <person name="Lian J.-Q."/>
            <person name="Ito T."/>
            <person name="Kanamori M."/>
            <person name="Matsumaru H."/>
            <person name="Maruyama A."/>
            <person name="Murakami H."/>
            <person name="Hosoyama A."/>
            <person name="Mizutani-Ui Y."/>
            <person name="Takahashi N.K."/>
            <person name="Sawano T."/>
            <person name="Inoue R."/>
            <person name="Kaito C."/>
            <person name="Sekimizu K."/>
            <person name="Hirakawa H."/>
            <person name="Kuhara S."/>
            <person name="Goto S."/>
            <person name="Yabuzaki J."/>
            <person name="Kanehisa M."/>
            <person name="Yamashita A."/>
            <person name="Oshima K."/>
            <person name="Furuya K."/>
            <person name="Yoshino C."/>
            <person name="Shiba T."/>
            <person name="Hattori M."/>
            <person name="Ogasawara N."/>
            <person name="Hayashi H."/>
            <person name="Hiramatsu K."/>
        </authorList>
    </citation>
    <scope>NUCLEOTIDE SEQUENCE [LARGE SCALE GENOMIC DNA]</scope>
    <source>
        <strain>N315</strain>
    </source>
</reference>
<comment type="function">
    <text evidence="1">Peptidoglycan hydrolase (autolysin) specifically acting on polyglycine interpeptide bridges of the cell wall peptidoglycan.</text>
</comment>
<comment type="catalytic activity">
    <reaction>
        <text>Hydrolysis of the -Gly-|-Gly- bond in the pentaglycine inter-peptide link joining staphylococcal cell wall peptidoglycans.</text>
        <dbReference type="EC" id="3.4.24.75"/>
    </reaction>
</comment>
<comment type="cofactor">
    <cofactor evidence="1">
        <name>Zn(2+)</name>
        <dbReference type="ChEBI" id="CHEBI:29105"/>
    </cofactor>
    <text evidence="1">Binds 1 zinc ion per subunit.</text>
</comment>
<comment type="subunit">
    <text evidence="1">Monomer.</text>
</comment>
<comment type="subcellular location">
    <subcellularLocation>
        <location evidence="1">Secreted</location>
    </subcellularLocation>
</comment>
<comment type="similarity">
    <text evidence="3">Belongs to the peptidase M23B family.</text>
</comment>
<accession>Q7A7T0</accession>
<evidence type="ECO:0000250" key="1"/>
<evidence type="ECO:0000256" key="2">
    <source>
        <dbReference type="SAM" id="MobiDB-lite"/>
    </source>
</evidence>
<evidence type="ECO:0000305" key="3"/>